<sequence>MTNTVTIELKIGYKYAAEVVKAVLGVILFHRQFSTVPARTIDVLDITVPTLVGAELNEQLATKAAEFIDTIRNEAGANGQMILLLYERSPKKSWFGKGNTIPWEQWILHTTILEEGDSYQESSLSLEAAVEQIVQAVNLRSLSYLPPVAMDSGNYPYEIVTPTSTEGWGSLLKRMIIENVSGGD</sequence>
<organism>
    <name type="scientific">Schizosaccharomyces pombe (strain 972 / ATCC 24843)</name>
    <name type="common">Fission yeast</name>
    <dbReference type="NCBI Taxonomy" id="284812"/>
    <lineage>
        <taxon>Eukaryota</taxon>
        <taxon>Fungi</taxon>
        <taxon>Dikarya</taxon>
        <taxon>Ascomycota</taxon>
        <taxon>Taphrinomycotina</taxon>
        <taxon>Schizosaccharomycetes</taxon>
        <taxon>Schizosaccharomycetales</taxon>
        <taxon>Schizosaccharomycetaceae</taxon>
        <taxon>Schizosaccharomyces</taxon>
    </lineage>
</organism>
<dbReference type="EMBL" id="CU329670">
    <property type="protein sequence ID" value="CAB11600.1"/>
    <property type="molecule type" value="Genomic_DNA"/>
</dbReference>
<dbReference type="PIR" id="T38383">
    <property type="entry name" value="T38383"/>
</dbReference>
<dbReference type="RefSeq" id="NP_593807.1">
    <property type="nucleotide sequence ID" value="NM_001019236.2"/>
</dbReference>
<dbReference type="PDB" id="4YK8">
    <property type="method" value="X-ray"/>
    <property type="resolution" value="3.00 A"/>
    <property type="chains" value="A=1-184"/>
</dbReference>
<dbReference type="PDBsum" id="4YK8"/>
<dbReference type="SMR" id="O13978"/>
<dbReference type="BioGRID" id="279174">
    <property type="interactions" value="19"/>
</dbReference>
<dbReference type="ComplexPortal" id="CPX-25773">
    <property type="entry name" value="Atg1/ULK1 protein kinase complex"/>
</dbReference>
<dbReference type="DIP" id="DIP-61610N"/>
<dbReference type="FunCoup" id="O13978">
    <property type="interactions" value="294"/>
</dbReference>
<dbReference type="IntAct" id="O13978">
    <property type="interactions" value="1"/>
</dbReference>
<dbReference type="STRING" id="284812.O13978"/>
<dbReference type="PaxDb" id="4896-SPAC25H1.03.1"/>
<dbReference type="EnsemblFungi" id="SPAC25H1.03.1">
    <property type="protein sequence ID" value="SPAC25H1.03.1:pep"/>
    <property type="gene ID" value="SPAC25H1.03"/>
</dbReference>
<dbReference type="GeneID" id="2542723"/>
<dbReference type="KEGG" id="spo:2542723"/>
<dbReference type="PomBase" id="SPAC25H1.03">
    <property type="gene designation" value="atg101"/>
</dbReference>
<dbReference type="VEuPathDB" id="FungiDB:SPAC25H1.03"/>
<dbReference type="eggNOG" id="KOG4493">
    <property type="taxonomic scope" value="Eukaryota"/>
</dbReference>
<dbReference type="HOGENOM" id="CLU_069661_1_1_1"/>
<dbReference type="InParanoid" id="O13978"/>
<dbReference type="OMA" id="VCWEIWT"/>
<dbReference type="PhylomeDB" id="O13978"/>
<dbReference type="Reactome" id="R-SPO-1632852">
    <property type="pathway name" value="Macroautophagy"/>
</dbReference>
<dbReference type="EvolutionaryTrace" id="O13978"/>
<dbReference type="PRO" id="PR:O13978"/>
<dbReference type="Proteomes" id="UP000002485">
    <property type="component" value="Chromosome I"/>
</dbReference>
<dbReference type="GO" id="GO:1990316">
    <property type="term" value="C:Atg1/ULK1 kinase complex"/>
    <property type="evidence" value="ECO:0000314"/>
    <property type="project" value="PomBase"/>
</dbReference>
<dbReference type="GO" id="GO:0005829">
    <property type="term" value="C:cytosol"/>
    <property type="evidence" value="ECO:0007005"/>
    <property type="project" value="PomBase"/>
</dbReference>
<dbReference type="GO" id="GO:0005634">
    <property type="term" value="C:nucleus"/>
    <property type="evidence" value="ECO:0007005"/>
    <property type="project" value="PomBase"/>
</dbReference>
<dbReference type="GO" id="GO:0000407">
    <property type="term" value="C:phagophore assembly site"/>
    <property type="evidence" value="ECO:0000314"/>
    <property type="project" value="PomBase"/>
</dbReference>
<dbReference type="GO" id="GO:0034045">
    <property type="term" value="C:phagophore assembly site membrane"/>
    <property type="evidence" value="ECO:0007669"/>
    <property type="project" value="UniProtKB-SubCell"/>
</dbReference>
<dbReference type="GO" id="GO:0019901">
    <property type="term" value="F:protein kinase binding"/>
    <property type="evidence" value="ECO:0000318"/>
    <property type="project" value="GO_Central"/>
</dbReference>
<dbReference type="GO" id="GO:0000045">
    <property type="term" value="P:autophagosome assembly"/>
    <property type="evidence" value="ECO:0000315"/>
    <property type="project" value="PomBase"/>
</dbReference>
<dbReference type="GO" id="GO:0016236">
    <property type="term" value="P:macroautophagy"/>
    <property type="evidence" value="ECO:0000315"/>
    <property type="project" value="PomBase"/>
</dbReference>
<dbReference type="GO" id="GO:0051321">
    <property type="term" value="P:meiotic cell cycle"/>
    <property type="evidence" value="ECO:0007669"/>
    <property type="project" value="UniProtKB-KW"/>
</dbReference>
<dbReference type="GO" id="GO:0015031">
    <property type="term" value="P:protein transport"/>
    <property type="evidence" value="ECO:0007669"/>
    <property type="project" value="UniProtKB-KW"/>
</dbReference>
<dbReference type="GO" id="GO:0030435">
    <property type="term" value="P:sporulation resulting in formation of a cellular spore"/>
    <property type="evidence" value="ECO:0007669"/>
    <property type="project" value="UniProtKB-KW"/>
</dbReference>
<dbReference type="InterPro" id="IPR012445">
    <property type="entry name" value="ATG101"/>
</dbReference>
<dbReference type="PANTHER" id="PTHR13292">
    <property type="entry name" value="AUTOPHAGY-RELATED PROTEIN 101"/>
    <property type="match status" value="1"/>
</dbReference>
<dbReference type="PANTHER" id="PTHR13292:SF0">
    <property type="entry name" value="AUTOPHAGY-RELATED PROTEIN 101"/>
    <property type="match status" value="1"/>
</dbReference>
<dbReference type="Pfam" id="PF07855">
    <property type="entry name" value="ATG101"/>
    <property type="match status" value="1"/>
</dbReference>
<reference key="1">
    <citation type="journal article" date="2002" name="Nature">
        <title>The genome sequence of Schizosaccharomyces pombe.</title>
        <authorList>
            <person name="Wood V."/>
            <person name="Gwilliam R."/>
            <person name="Rajandream M.A."/>
            <person name="Lyne M.H."/>
            <person name="Lyne R."/>
            <person name="Stewart A."/>
            <person name="Sgouros J.G."/>
            <person name="Peat N."/>
            <person name="Hayles J."/>
            <person name="Baker S.G."/>
            <person name="Basham D."/>
            <person name="Bowman S."/>
            <person name="Brooks K."/>
            <person name="Brown D."/>
            <person name="Brown S."/>
            <person name="Chillingworth T."/>
            <person name="Churcher C.M."/>
            <person name="Collins M."/>
            <person name="Connor R."/>
            <person name="Cronin A."/>
            <person name="Davis P."/>
            <person name="Feltwell T."/>
            <person name="Fraser A."/>
            <person name="Gentles S."/>
            <person name="Goble A."/>
            <person name="Hamlin N."/>
            <person name="Harris D.E."/>
            <person name="Hidalgo J."/>
            <person name="Hodgson G."/>
            <person name="Holroyd S."/>
            <person name="Hornsby T."/>
            <person name="Howarth S."/>
            <person name="Huckle E.J."/>
            <person name="Hunt S."/>
            <person name="Jagels K."/>
            <person name="James K.D."/>
            <person name="Jones L."/>
            <person name="Jones M."/>
            <person name="Leather S."/>
            <person name="McDonald S."/>
            <person name="McLean J."/>
            <person name="Mooney P."/>
            <person name="Moule S."/>
            <person name="Mungall K.L."/>
            <person name="Murphy L.D."/>
            <person name="Niblett D."/>
            <person name="Odell C."/>
            <person name="Oliver K."/>
            <person name="O'Neil S."/>
            <person name="Pearson D."/>
            <person name="Quail M.A."/>
            <person name="Rabbinowitsch E."/>
            <person name="Rutherford K.M."/>
            <person name="Rutter S."/>
            <person name="Saunders D."/>
            <person name="Seeger K."/>
            <person name="Sharp S."/>
            <person name="Skelton J."/>
            <person name="Simmonds M.N."/>
            <person name="Squares R."/>
            <person name="Squares S."/>
            <person name="Stevens K."/>
            <person name="Taylor K."/>
            <person name="Taylor R.G."/>
            <person name="Tivey A."/>
            <person name="Walsh S.V."/>
            <person name="Warren T."/>
            <person name="Whitehead S."/>
            <person name="Woodward J.R."/>
            <person name="Volckaert G."/>
            <person name="Aert R."/>
            <person name="Robben J."/>
            <person name="Grymonprez B."/>
            <person name="Weltjens I."/>
            <person name="Vanstreels E."/>
            <person name="Rieger M."/>
            <person name="Schaefer M."/>
            <person name="Mueller-Auer S."/>
            <person name="Gabel C."/>
            <person name="Fuchs M."/>
            <person name="Duesterhoeft A."/>
            <person name="Fritzc C."/>
            <person name="Holzer E."/>
            <person name="Moestl D."/>
            <person name="Hilbert H."/>
            <person name="Borzym K."/>
            <person name="Langer I."/>
            <person name="Beck A."/>
            <person name="Lehrach H."/>
            <person name="Reinhardt R."/>
            <person name="Pohl T.M."/>
            <person name="Eger P."/>
            <person name="Zimmermann W."/>
            <person name="Wedler H."/>
            <person name="Wambutt R."/>
            <person name="Purnelle B."/>
            <person name="Goffeau A."/>
            <person name="Cadieu E."/>
            <person name="Dreano S."/>
            <person name="Gloux S."/>
            <person name="Lelaure V."/>
            <person name="Mottier S."/>
            <person name="Galibert F."/>
            <person name="Aves S.J."/>
            <person name="Xiang Z."/>
            <person name="Hunt C."/>
            <person name="Moore K."/>
            <person name="Hurst S.M."/>
            <person name="Lucas M."/>
            <person name="Rochet M."/>
            <person name="Gaillardin C."/>
            <person name="Tallada V.A."/>
            <person name="Garzon A."/>
            <person name="Thode G."/>
            <person name="Daga R.R."/>
            <person name="Cruzado L."/>
            <person name="Jimenez J."/>
            <person name="Sanchez M."/>
            <person name="del Rey F."/>
            <person name="Benito J."/>
            <person name="Dominguez A."/>
            <person name="Revuelta J.L."/>
            <person name="Moreno S."/>
            <person name="Armstrong J."/>
            <person name="Forsburg S.L."/>
            <person name="Cerutti L."/>
            <person name="Lowe T."/>
            <person name="McCombie W.R."/>
            <person name="Paulsen I."/>
            <person name="Potashkin J."/>
            <person name="Shpakovski G.V."/>
            <person name="Ussery D."/>
            <person name="Barrell B.G."/>
            <person name="Nurse P."/>
        </authorList>
    </citation>
    <scope>NUCLEOTIDE SEQUENCE [LARGE SCALE GENOMIC DNA]</scope>
    <source>
        <strain>972 / ATCC 24843</strain>
    </source>
</reference>
<reference key="2">
    <citation type="journal article" date="2005" name="Curr. Biol.">
        <title>A large-scale screen in S. pombe identifies seven novel genes required for critical meiotic events.</title>
        <authorList>
            <person name="Martin-Castellanos C."/>
            <person name="Blanco M."/>
            <person name="Rozalen A.E."/>
            <person name="Perez-Hidalgo L."/>
            <person name="Garcia A.I."/>
            <person name="Conde F."/>
            <person name="Mata J."/>
            <person name="Ellermeier C."/>
            <person name="Davis L."/>
            <person name="San-Segundo P."/>
            <person name="Smith G.R."/>
            <person name="Moreno S."/>
        </authorList>
    </citation>
    <scope>FUNCTION IN MEIOSIS/SPORULATION</scope>
</reference>
<reference key="3">
    <citation type="journal article" date="2006" name="Nat. Biotechnol.">
        <title>ORFeome cloning and global analysis of protein localization in the fission yeast Schizosaccharomyces pombe.</title>
        <authorList>
            <person name="Matsuyama A."/>
            <person name="Arai R."/>
            <person name="Yashiroda Y."/>
            <person name="Shirai A."/>
            <person name="Kamata A."/>
            <person name="Sekido S."/>
            <person name="Kobayashi Y."/>
            <person name="Hashimoto A."/>
            <person name="Hamamoto M."/>
            <person name="Hiraoka Y."/>
            <person name="Horinouchi S."/>
            <person name="Yoshida M."/>
        </authorList>
    </citation>
    <scope>SUBCELLULAR LOCATION [LARGE SCALE ANALYSIS]</scope>
</reference>
<reference key="4">
    <citation type="journal article" date="2013" name="PLoS Genet.">
        <title>Global analysis of fission yeast mating genes reveals new autophagy factors.</title>
        <authorList>
            <person name="Sun L.L."/>
            <person name="Li M."/>
            <person name="Suo F."/>
            <person name="Liu X.M."/>
            <person name="Shen E.Z."/>
            <person name="Yang B."/>
            <person name="Dong M.Q."/>
            <person name="He W.Z."/>
            <person name="Du L.L."/>
        </authorList>
    </citation>
    <scope>FUNCTION</scope>
    <scope>DISRUPTION PHENOTYPE</scope>
    <scope>SUBCELLULAR LOCATION</scope>
</reference>
<reference key="5">
    <citation type="journal article" date="2017" name="Autophagy">
        <title>Conserved and unique features of the fission yeast core Atg1 complex.</title>
        <authorList>
            <person name="Nanji T."/>
            <person name="Liu X."/>
            <person name="Chew L.H."/>
            <person name="Li F.K."/>
            <person name="Biswas M."/>
            <person name="Yu Z.Q."/>
            <person name="Lu S."/>
            <person name="Dong M.Q."/>
            <person name="Du L.L."/>
            <person name="Klionsky D.J."/>
            <person name="Yip C.K."/>
        </authorList>
    </citation>
    <scope>SUBUNIT</scope>
    <scope>FUNCTION</scope>
</reference>
<reference evidence="9" key="6">
    <citation type="journal article" date="2015" name="Nat. Struct. Mol. Biol.">
        <title>Structure of the Atg101-Atg13 complex reveals essential roles of Atg101 in autophagy initiation.</title>
        <authorList>
            <person name="Suzuki H."/>
            <person name="Kaizuka T."/>
            <person name="Mizushima N."/>
            <person name="Noda N.N."/>
        </authorList>
    </citation>
    <scope>X-RAY CRYSTALLOGRAPHY (3.00 ANGSTROMS) IN COMPLEX WITH ATG13</scope>
    <scope>FUNCTION</scope>
    <scope>INTERACTION WITH ATG13</scope>
    <scope>SUBUNIT</scope>
    <scope>MUTAGENESIS OF PHE-29</scope>
</reference>
<evidence type="ECO:0000269" key="1">
    <source>
    </source>
</evidence>
<evidence type="ECO:0000269" key="2">
    <source>
    </source>
</evidence>
<evidence type="ECO:0000269" key="3">
    <source>
    </source>
</evidence>
<evidence type="ECO:0000269" key="4">
    <source>
    </source>
</evidence>
<evidence type="ECO:0000269" key="5">
    <source>
    </source>
</evidence>
<evidence type="ECO:0000303" key="6">
    <source>
    </source>
</evidence>
<evidence type="ECO:0000303" key="7">
    <source>
    </source>
</evidence>
<evidence type="ECO:0000305" key="8"/>
<evidence type="ECO:0007744" key="9">
    <source>
        <dbReference type="PDB" id="4YK8"/>
    </source>
</evidence>
<evidence type="ECO:0007829" key="10">
    <source>
        <dbReference type="PDB" id="4YK8"/>
    </source>
</evidence>
<protein>
    <recommendedName>
        <fullName evidence="7">Autophagy-related protein 101</fullName>
    </recommendedName>
    <alternativeName>
        <fullName evidence="6">Meiotically up-regulated gene protein 66</fullName>
    </alternativeName>
</protein>
<feature type="chain" id="PRO_0000278502" description="Autophagy-related protein 101">
    <location>
        <begin position="1"/>
        <end position="184"/>
    </location>
</feature>
<feature type="mutagenesis site" description="Impairs the interaction with atg13." evidence="4">
    <original>F</original>
    <variation>R</variation>
    <location>
        <position position="29"/>
    </location>
</feature>
<feature type="strand" evidence="10">
    <location>
        <begin position="3"/>
        <end position="12"/>
    </location>
</feature>
<feature type="turn" evidence="10">
    <location>
        <begin position="13"/>
        <end position="15"/>
    </location>
</feature>
<feature type="helix" evidence="10">
    <location>
        <begin position="16"/>
        <end position="29"/>
    </location>
</feature>
<feature type="strand" evidence="10">
    <location>
        <begin position="40"/>
        <end position="43"/>
    </location>
</feature>
<feature type="strand" evidence="10">
    <location>
        <begin position="46"/>
        <end position="49"/>
    </location>
</feature>
<feature type="helix" evidence="10">
    <location>
        <begin position="54"/>
        <end position="73"/>
    </location>
</feature>
<feature type="strand" evidence="10">
    <location>
        <begin position="78"/>
        <end position="85"/>
    </location>
</feature>
<feature type="helix" evidence="10">
    <location>
        <begin position="90"/>
        <end position="93"/>
    </location>
</feature>
<feature type="turn" evidence="10">
    <location>
        <begin position="94"/>
        <end position="96"/>
    </location>
</feature>
<feature type="strand" evidence="10">
    <location>
        <begin position="103"/>
        <end position="113"/>
    </location>
</feature>
<feature type="helix" evidence="10">
    <location>
        <begin position="119"/>
        <end position="137"/>
    </location>
</feature>
<feature type="strand" evidence="10">
    <location>
        <begin position="139"/>
        <end position="141"/>
    </location>
</feature>
<feature type="strand" evidence="10">
    <location>
        <begin position="157"/>
        <end position="160"/>
    </location>
</feature>
<name>AT101_SCHPO</name>
<proteinExistence type="evidence at protein level"/>
<comment type="function">
    <text evidence="1 3 4 5">Autophagy factor required for autophagosome formation (PubMed:23950735). Component of the atg1 kinase complex in which it stabilizes atg13 (PubMed:26030876, PubMed:28976798). Is also responsible for recruiting downstream factors to the autophagosome-formation site (PubMed:26030876). Has a role in meiosis and sporulation (PubMed:16303567).</text>
</comment>
<comment type="subunit">
    <text evidence="4">Component of the atg1 kinase complex composed of at least atg1, atg13, atg17 and atg101 (PubMed:26030876). Interacts directly with atg13 (PubMed:26030876).</text>
</comment>
<comment type="interaction">
    <interactant intactId="EBI-16158557">
        <id>O13978</id>
    </interactant>
    <interactant intactId="EBI-16158534">
        <id>O36019</id>
        <label>atg13</label>
    </interactant>
    <organismsDiffer>false</organismsDiffer>
    <experiments>6</experiments>
</comment>
<comment type="subcellular location">
    <subcellularLocation>
        <location evidence="2">Cytoplasm</location>
    </subcellularLocation>
    <subcellularLocation>
        <location evidence="2">Nucleus</location>
    </subcellularLocation>
    <subcellularLocation>
        <location evidence="3">Preautophagosomal structure membrane</location>
        <topology evidence="3">Peripheral membrane protein</topology>
    </subcellularLocation>
</comment>
<comment type="disruption phenotype">
    <text evidence="3">Impairs atg8-processing.</text>
</comment>
<comment type="similarity">
    <text evidence="8">Belongs to the ATG101 family.</text>
</comment>
<accession>O13978</accession>
<gene>
    <name evidence="7" type="primary">atg101</name>
    <name evidence="6" type="synonym">mug66</name>
    <name type="ORF">SPAC25H1.03</name>
</gene>
<keyword id="KW-0002">3D-structure</keyword>
<keyword id="KW-0072">Autophagy</keyword>
<keyword id="KW-0963">Cytoplasm</keyword>
<keyword id="KW-0469">Meiosis</keyword>
<keyword id="KW-0472">Membrane</keyword>
<keyword id="KW-0539">Nucleus</keyword>
<keyword id="KW-0653">Protein transport</keyword>
<keyword id="KW-1185">Reference proteome</keyword>
<keyword id="KW-0749">Sporulation</keyword>
<keyword id="KW-0813">Transport</keyword>